<accession>Q9MUQ6</accession>
<proteinExistence type="inferred from homology"/>
<comment type="function">
    <text evidence="1">NDH shuttles electrons from NAD(P)H:plastoquinone, via FMN and iron-sulfur (Fe-S) centers, to quinones in the photosynthetic chain and possibly in a chloroplast respiratory chain. The immediate electron acceptor for the enzyme in this species is believed to be plastoquinone. Couples the redox reaction to proton translocation, and thus conserves the redox energy in a proton gradient.</text>
</comment>
<comment type="catalytic activity">
    <reaction evidence="1">
        <text>a plastoquinone + NADH + (n+1) H(+)(in) = a plastoquinol + NAD(+) + n H(+)(out)</text>
        <dbReference type="Rhea" id="RHEA:42608"/>
        <dbReference type="Rhea" id="RHEA-COMP:9561"/>
        <dbReference type="Rhea" id="RHEA-COMP:9562"/>
        <dbReference type="ChEBI" id="CHEBI:15378"/>
        <dbReference type="ChEBI" id="CHEBI:17757"/>
        <dbReference type="ChEBI" id="CHEBI:57540"/>
        <dbReference type="ChEBI" id="CHEBI:57945"/>
        <dbReference type="ChEBI" id="CHEBI:62192"/>
    </reaction>
</comment>
<comment type="catalytic activity">
    <reaction evidence="1">
        <text>a plastoquinone + NADPH + (n+1) H(+)(in) = a plastoquinol + NADP(+) + n H(+)(out)</text>
        <dbReference type="Rhea" id="RHEA:42612"/>
        <dbReference type="Rhea" id="RHEA-COMP:9561"/>
        <dbReference type="Rhea" id="RHEA-COMP:9562"/>
        <dbReference type="ChEBI" id="CHEBI:15378"/>
        <dbReference type="ChEBI" id="CHEBI:17757"/>
        <dbReference type="ChEBI" id="CHEBI:57783"/>
        <dbReference type="ChEBI" id="CHEBI:58349"/>
        <dbReference type="ChEBI" id="CHEBI:62192"/>
    </reaction>
</comment>
<comment type="subunit">
    <text evidence="1">NDH is composed of at least 16 different subunits, 5 of which are encoded in the nucleus.</text>
</comment>
<comment type="subcellular location">
    <subcellularLocation>
        <location evidence="1">Plastid</location>
        <location evidence="1">Chloroplast thylakoid membrane</location>
        <topology evidence="1">Multi-pass membrane protein</topology>
    </subcellularLocation>
</comment>
<comment type="similarity">
    <text evidence="1">Belongs to the complex I subunit 2 family.</text>
</comment>
<name>NU2C_MESVI</name>
<feature type="chain" id="PRO_0000117666" description="NAD(P)H-quinone oxidoreductase subunit 2, chloroplastic">
    <location>
        <begin position="1"/>
        <end position="502"/>
    </location>
</feature>
<feature type="transmembrane region" description="Helical" evidence="1">
    <location>
        <begin position="15"/>
        <end position="35"/>
    </location>
</feature>
<feature type="transmembrane region" description="Helical" evidence="1">
    <location>
        <begin position="42"/>
        <end position="62"/>
    </location>
</feature>
<feature type="transmembrane region" description="Helical" evidence="1">
    <location>
        <begin position="79"/>
        <end position="99"/>
    </location>
</feature>
<feature type="transmembrane region" description="Helical" evidence="1">
    <location>
        <begin position="108"/>
        <end position="128"/>
    </location>
</feature>
<feature type="transmembrane region" description="Helical" evidence="1">
    <location>
        <begin position="132"/>
        <end position="152"/>
    </location>
</feature>
<feature type="transmembrane region" description="Helical" evidence="1">
    <location>
        <begin position="167"/>
        <end position="187"/>
    </location>
</feature>
<feature type="transmembrane region" description="Helical" evidence="1">
    <location>
        <begin position="210"/>
        <end position="230"/>
    </location>
</feature>
<feature type="transmembrane region" description="Helical" evidence="1">
    <location>
        <begin position="253"/>
        <end position="275"/>
    </location>
</feature>
<feature type="transmembrane region" description="Helical" evidence="1">
    <location>
        <begin position="278"/>
        <end position="298"/>
    </location>
</feature>
<feature type="transmembrane region" description="Helical" evidence="1">
    <location>
        <begin position="307"/>
        <end position="327"/>
    </location>
</feature>
<feature type="transmembrane region" description="Helical" evidence="1">
    <location>
        <begin position="334"/>
        <end position="354"/>
    </location>
</feature>
<feature type="transmembrane region" description="Helical" evidence="1">
    <location>
        <begin position="375"/>
        <end position="395"/>
    </location>
</feature>
<feature type="transmembrane region" description="Helical" evidence="1">
    <location>
        <begin position="413"/>
        <end position="433"/>
    </location>
</feature>
<feature type="transmembrane region" description="Helical" evidence="1">
    <location>
        <begin position="468"/>
        <end position="488"/>
    </location>
</feature>
<keyword id="KW-0150">Chloroplast</keyword>
<keyword id="KW-0472">Membrane</keyword>
<keyword id="KW-0520">NAD</keyword>
<keyword id="KW-0521">NADP</keyword>
<keyword id="KW-0934">Plastid</keyword>
<keyword id="KW-0618">Plastoquinone</keyword>
<keyword id="KW-0874">Quinone</keyword>
<keyword id="KW-0793">Thylakoid</keyword>
<keyword id="KW-1278">Translocase</keyword>
<keyword id="KW-0812">Transmembrane</keyword>
<keyword id="KW-1133">Transmembrane helix</keyword>
<keyword id="KW-0813">Transport</keyword>
<evidence type="ECO:0000255" key="1">
    <source>
        <dbReference type="HAMAP-Rule" id="MF_00445"/>
    </source>
</evidence>
<protein>
    <recommendedName>
        <fullName evidence="1">NAD(P)H-quinone oxidoreductase subunit 2, chloroplastic</fullName>
        <ecNumber evidence="1">7.1.1.-</ecNumber>
    </recommendedName>
    <alternativeName>
        <fullName evidence="1">NAD(P)H dehydrogenase, subunit 2</fullName>
    </alternativeName>
    <alternativeName>
        <fullName evidence="1">NADH-plastoquinone oxidoreductase subunit 2</fullName>
    </alternativeName>
</protein>
<sequence length="502" mass="54973">MEFKDLIASLNIDAVLPEAIIICSSLFILIIDLIFQRRANAVLPYMAILGLILSMLSLLFQWNGKEVTAFLGSFQTDSLSIAFRLLIALSSMLCVLLSIEYLENSKKTLSEFLVIFLTATLGAMLLCGSNDILMIFLSLETLGLCSYILTGYMKKDIRSNEASIKYLLIGAASSSILLYGFSLLYGLSHGHIEIHEIAANLIKDQNGNSLASLVALALIIVGISFKIAAAPFHQWAPDVYEGAPTPVVAFLSVSSKAAGLMLATRIMTILFPYIINEWHNIFQILAILSMAIGNIIAISQTNIKRMLGYSSIAQAGFLLVGLLAGNINGYSSMLVYMLIYLFMNLGAFACVILFSLKTGSDQIRDYGGLYLKDPILALCLSICLLSLGGIPPFGGFFGKLYLFWAGWEAGSYLLVFVGLLTSVISIFYYIKIIKMMIIKESPEVSFAIKNYSQKRWSIKDITPIEVSILICVIGTTISGIFVNPIISIAQQTVIDSSWLMAI</sequence>
<dbReference type="EC" id="7.1.1.-" evidence="1"/>
<dbReference type="EMBL" id="AF166114">
    <property type="protein sequence ID" value="AAF43844.1"/>
    <property type="molecule type" value="Genomic_DNA"/>
</dbReference>
<dbReference type="RefSeq" id="NP_038404.1">
    <property type="nucleotide sequence ID" value="NC_002186.1"/>
</dbReference>
<dbReference type="SMR" id="Q9MUQ6"/>
<dbReference type="GeneID" id="800912"/>
<dbReference type="GO" id="GO:0009535">
    <property type="term" value="C:chloroplast thylakoid membrane"/>
    <property type="evidence" value="ECO:0007669"/>
    <property type="project" value="UniProtKB-SubCell"/>
</dbReference>
<dbReference type="GO" id="GO:0008137">
    <property type="term" value="F:NADH dehydrogenase (ubiquinone) activity"/>
    <property type="evidence" value="ECO:0007669"/>
    <property type="project" value="InterPro"/>
</dbReference>
<dbReference type="GO" id="GO:0048038">
    <property type="term" value="F:quinone binding"/>
    <property type="evidence" value="ECO:0007669"/>
    <property type="project" value="UniProtKB-KW"/>
</dbReference>
<dbReference type="GO" id="GO:0042773">
    <property type="term" value="P:ATP synthesis coupled electron transport"/>
    <property type="evidence" value="ECO:0007669"/>
    <property type="project" value="InterPro"/>
</dbReference>
<dbReference type="GO" id="GO:0019684">
    <property type="term" value="P:photosynthesis, light reaction"/>
    <property type="evidence" value="ECO:0007669"/>
    <property type="project" value="UniProtKB-UniRule"/>
</dbReference>
<dbReference type="HAMAP" id="MF_00445">
    <property type="entry name" value="NDH1_NuoN_1"/>
    <property type="match status" value="1"/>
</dbReference>
<dbReference type="InterPro" id="IPR010096">
    <property type="entry name" value="NADH-Q_OxRdtase_suN/2"/>
</dbReference>
<dbReference type="InterPro" id="IPR001750">
    <property type="entry name" value="ND/Mrp_TM"/>
</dbReference>
<dbReference type="InterPro" id="IPR045693">
    <property type="entry name" value="Ndh2_N"/>
</dbReference>
<dbReference type="NCBIfam" id="TIGR01770">
    <property type="entry name" value="NDH_I_N"/>
    <property type="match status" value="1"/>
</dbReference>
<dbReference type="NCBIfam" id="NF002701">
    <property type="entry name" value="PRK02504.1"/>
    <property type="match status" value="1"/>
</dbReference>
<dbReference type="PANTHER" id="PTHR22773">
    <property type="entry name" value="NADH DEHYDROGENASE"/>
    <property type="match status" value="1"/>
</dbReference>
<dbReference type="Pfam" id="PF19530">
    <property type="entry name" value="Ndh2_N"/>
    <property type="match status" value="1"/>
</dbReference>
<dbReference type="Pfam" id="PF00361">
    <property type="entry name" value="Proton_antipo_M"/>
    <property type="match status" value="1"/>
</dbReference>
<dbReference type="PRINTS" id="PR01434">
    <property type="entry name" value="NADHDHGNASE5"/>
</dbReference>
<gene>
    <name evidence="1" type="primary">ndhB</name>
</gene>
<organism>
    <name type="scientific">Mesostigma viride</name>
    <name type="common">Green alga</name>
    <dbReference type="NCBI Taxonomy" id="41882"/>
    <lineage>
        <taxon>Eukaryota</taxon>
        <taxon>Viridiplantae</taxon>
        <taxon>Streptophyta</taxon>
        <taxon>Mesostigmatophyceae</taxon>
        <taxon>Mesostigmatales</taxon>
        <taxon>Mesostigmataceae</taxon>
        <taxon>Mesostigma</taxon>
    </lineage>
</organism>
<geneLocation type="chloroplast"/>
<reference key="1">
    <citation type="journal article" date="2000" name="Nature">
        <title>Ancestral chloroplast genome in Mesostigma viride reveals an early branch of green plant evolution.</title>
        <authorList>
            <person name="Lemieux C."/>
            <person name="Otis C."/>
            <person name="Turmel M."/>
        </authorList>
    </citation>
    <scope>NUCLEOTIDE SEQUENCE [LARGE SCALE GENOMIC DNA]</scope>
    <source>
        <strain>NIES-296 / KY-14 / CCMP 2046</strain>
    </source>
</reference>